<proteinExistence type="inferred from homology"/>
<feature type="chain" id="PRO_1000053269" description="ATP synthase gamma chain">
    <location>
        <begin position="1"/>
        <end position="289"/>
    </location>
</feature>
<accession>Q3J6N0</accession>
<comment type="function">
    <text evidence="1">Produces ATP from ADP in the presence of a proton gradient across the membrane. The gamma chain is believed to be important in regulating ATPase activity and the flow of protons through the CF(0) complex.</text>
</comment>
<comment type="subunit">
    <text evidence="1">F-type ATPases have 2 components, CF(1) - the catalytic core - and CF(0) - the membrane proton channel. CF(1) has five subunits: alpha(3), beta(3), gamma(1), delta(1), epsilon(1). CF(0) has three main subunits: a, b and c.</text>
</comment>
<comment type="subcellular location">
    <subcellularLocation>
        <location evidence="1">Cell inner membrane</location>
        <topology evidence="1">Peripheral membrane protein</topology>
    </subcellularLocation>
</comment>
<comment type="similarity">
    <text evidence="1">Belongs to the ATPase gamma chain family.</text>
</comment>
<protein>
    <recommendedName>
        <fullName evidence="1">ATP synthase gamma chain</fullName>
    </recommendedName>
    <alternativeName>
        <fullName evidence="1">ATP synthase F1 sector gamma subunit</fullName>
    </alternativeName>
    <alternativeName>
        <fullName evidence="1">F-ATPase gamma subunit</fullName>
    </alternativeName>
</protein>
<name>ATPG_NITOC</name>
<gene>
    <name evidence="1" type="primary">atpG</name>
    <name type="ordered locus">Noc_3075</name>
</gene>
<evidence type="ECO:0000255" key="1">
    <source>
        <dbReference type="HAMAP-Rule" id="MF_00815"/>
    </source>
</evidence>
<keyword id="KW-0066">ATP synthesis</keyword>
<keyword id="KW-0997">Cell inner membrane</keyword>
<keyword id="KW-1003">Cell membrane</keyword>
<keyword id="KW-0139">CF(1)</keyword>
<keyword id="KW-0375">Hydrogen ion transport</keyword>
<keyword id="KW-0406">Ion transport</keyword>
<keyword id="KW-0472">Membrane</keyword>
<keyword id="KW-1185">Reference proteome</keyword>
<keyword id="KW-0813">Transport</keyword>
<organism>
    <name type="scientific">Nitrosococcus oceani (strain ATCC 19707 / BCRC 17464 / JCM 30415 / NCIMB 11848 / C-107)</name>
    <dbReference type="NCBI Taxonomy" id="323261"/>
    <lineage>
        <taxon>Bacteria</taxon>
        <taxon>Pseudomonadati</taxon>
        <taxon>Pseudomonadota</taxon>
        <taxon>Gammaproteobacteria</taxon>
        <taxon>Chromatiales</taxon>
        <taxon>Chromatiaceae</taxon>
        <taxon>Nitrosococcus</taxon>
    </lineage>
</organism>
<dbReference type="EMBL" id="CP000127">
    <property type="protein sequence ID" value="ABA59516.1"/>
    <property type="molecule type" value="Genomic_DNA"/>
</dbReference>
<dbReference type="RefSeq" id="WP_002813263.1">
    <property type="nucleotide sequence ID" value="NC_007484.1"/>
</dbReference>
<dbReference type="SMR" id="Q3J6N0"/>
<dbReference type="FunCoup" id="Q3J6N0">
    <property type="interactions" value="428"/>
</dbReference>
<dbReference type="STRING" id="323261.Noc_3075"/>
<dbReference type="KEGG" id="noc:Noc_3075"/>
<dbReference type="eggNOG" id="COG0224">
    <property type="taxonomic scope" value="Bacteria"/>
</dbReference>
<dbReference type="HOGENOM" id="CLU_050669_0_1_6"/>
<dbReference type="InParanoid" id="Q3J6N0"/>
<dbReference type="Proteomes" id="UP000006838">
    <property type="component" value="Chromosome"/>
</dbReference>
<dbReference type="GO" id="GO:0005886">
    <property type="term" value="C:plasma membrane"/>
    <property type="evidence" value="ECO:0007669"/>
    <property type="project" value="UniProtKB-SubCell"/>
</dbReference>
<dbReference type="GO" id="GO:0045259">
    <property type="term" value="C:proton-transporting ATP synthase complex"/>
    <property type="evidence" value="ECO:0007669"/>
    <property type="project" value="UniProtKB-KW"/>
</dbReference>
<dbReference type="GO" id="GO:0005524">
    <property type="term" value="F:ATP binding"/>
    <property type="evidence" value="ECO:0007669"/>
    <property type="project" value="UniProtKB-UniRule"/>
</dbReference>
<dbReference type="GO" id="GO:0046933">
    <property type="term" value="F:proton-transporting ATP synthase activity, rotational mechanism"/>
    <property type="evidence" value="ECO:0007669"/>
    <property type="project" value="UniProtKB-UniRule"/>
</dbReference>
<dbReference type="GO" id="GO:0042777">
    <property type="term" value="P:proton motive force-driven plasma membrane ATP synthesis"/>
    <property type="evidence" value="ECO:0007669"/>
    <property type="project" value="UniProtKB-UniRule"/>
</dbReference>
<dbReference type="CDD" id="cd12151">
    <property type="entry name" value="F1-ATPase_gamma"/>
    <property type="match status" value="1"/>
</dbReference>
<dbReference type="FunFam" id="1.10.287.80:FF:000005">
    <property type="entry name" value="ATP synthase gamma chain"/>
    <property type="match status" value="1"/>
</dbReference>
<dbReference type="FunFam" id="3.40.1380.10:FF:000006">
    <property type="entry name" value="ATP synthase gamma chain"/>
    <property type="match status" value="1"/>
</dbReference>
<dbReference type="Gene3D" id="3.40.1380.10">
    <property type="match status" value="1"/>
</dbReference>
<dbReference type="Gene3D" id="1.10.287.80">
    <property type="entry name" value="ATP synthase, gamma subunit, helix hairpin domain"/>
    <property type="match status" value="1"/>
</dbReference>
<dbReference type="HAMAP" id="MF_00815">
    <property type="entry name" value="ATP_synth_gamma_bact"/>
    <property type="match status" value="1"/>
</dbReference>
<dbReference type="InterPro" id="IPR035968">
    <property type="entry name" value="ATP_synth_F1_ATPase_gsu"/>
</dbReference>
<dbReference type="InterPro" id="IPR000131">
    <property type="entry name" value="ATP_synth_F1_gsu"/>
</dbReference>
<dbReference type="InterPro" id="IPR023632">
    <property type="entry name" value="ATP_synth_F1_gsu_CS"/>
</dbReference>
<dbReference type="NCBIfam" id="TIGR01146">
    <property type="entry name" value="ATPsyn_F1gamma"/>
    <property type="match status" value="1"/>
</dbReference>
<dbReference type="NCBIfam" id="NF004144">
    <property type="entry name" value="PRK05621.1-1"/>
    <property type="match status" value="1"/>
</dbReference>
<dbReference type="PANTHER" id="PTHR11693">
    <property type="entry name" value="ATP SYNTHASE GAMMA CHAIN"/>
    <property type="match status" value="1"/>
</dbReference>
<dbReference type="PANTHER" id="PTHR11693:SF22">
    <property type="entry name" value="ATP SYNTHASE SUBUNIT GAMMA, MITOCHONDRIAL"/>
    <property type="match status" value="1"/>
</dbReference>
<dbReference type="Pfam" id="PF00231">
    <property type="entry name" value="ATP-synt"/>
    <property type="match status" value="1"/>
</dbReference>
<dbReference type="PRINTS" id="PR00126">
    <property type="entry name" value="ATPASEGAMMA"/>
</dbReference>
<dbReference type="SUPFAM" id="SSF52943">
    <property type="entry name" value="ATP synthase (F1-ATPase), gamma subunit"/>
    <property type="match status" value="1"/>
</dbReference>
<dbReference type="PROSITE" id="PS00153">
    <property type="entry name" value="ATPASE_GAMMA"/>
    <property type="match status" value="1"/>
</dbReference>
<sequence length="289" mass="32449">MASGKEIRSKIASVKNTQKITRAMEMVAASKMRKAQDRMRASRPYADKIRNVIRHLAQAHQEYQHPYLTSREAKKVGFIIVSSDRGLCGGLNTNLFRTLLRTMREWDEKGVPVELCIIGQKANAFFRRFGGSIAAQATHLGDSPHVEDLIGTVKVMLDNYQEGNVDRLYLAFNEFVNTMTQRPEIEQLLPIDANVGKTDEKLEHRWDYLYEPEAKEVLDQVLIRYIESLVYQGVVENIACEQAARMVAMKAASDNAGGFIDDLQLAYNKARQAAITQELSEIVGGAAAL</sequence>
<reference key="1">
    <citation type="journal article" date="2006" name="Appl. Environ. Microbiol.">
        <title>Complete genome sequence of the marine, chemolithoautotrophic, ammonia-oxidizing bacterium Nitrosococcus oceani ATCC 19707.</title>
        <authorList>
            <person name="Klotz M.G."/>
            <person name="Arp D.J."/>
            <person name="Chain P.S.G."/>
            <person name="El-Sheikh A.F."/>
            <person name="Hauser L.J."/>
            <person name="Hommes N.G."/>
            <person name="Larimer F.W."/>
            <person name="Malfatti S.A."/>
            <person name="Norton J.M."/>
            <person name="Poret-Peterson A.T."/>
            <person name="Vergez L.M."/>
            <person name="Ward B.B."/>
        </authorList>
    </citation>
    <scope>NUCLEOTIDE SEQUENCE [LARGE SCALE GENOMIC DNA]</scope>
    <source>
        <strain>ATCC 19707 / BCRC 17464 / JCM 30415 / NCIMB 11848 / C-107</strain>
    </source>
</reference>